<accession>B3DLE8</accession>
<reference key="1">
    <citation type="submission" date="2008-06" db="EMBL/GenBank/DDBJ databases">
        <authorList>
            <consortium name="NIH - Xenopus Gene Collection (XGC) project"/>
        </authorList>
    </citation>
    <scope>NUCLEOTIDE SEQUENCE [LARGE SCALE MRNA]</scope>
    <source>
        <tissue>Embryo</tissue>
    </source>
</reference>
<dbReference type="EMBL" id="BC167418">
    <property type="protein sequence ID" value="AAI67418.1"/>
    <property type="molecule type" value="mRNA"/>
</dbReference>
<dbReference type="RefSeq" id="NP_001123745.1">
    <property type="nucleotide sequence ID" value="NM_001130273.1"/>
</dbReference>
<dbReference type="SMR" id="B3DLE8"/>
<dbReference type="FunCoup" id="B3DLE8">
    <property type="interactions" value="2264"/>
</dbReference>
<dbReference type="STRING" id="8364.ENSXETP00000009754"/>
<dbReference type="PaxDb" id="8364-ENSXETP00000043089"/>
<dbReference type="GeneID" id="100170491"/>
<dbReference type="KEGG" id="xtr:100170491"/>
<dbReference type="AGR" id="Xenbase:XB-GENE-5754925"/>
<dbReference type="CTD" id="54908"/>
<dbReference type="Xenbase" id="XB-GENE-5754925">
    <property type="gene designation" value="spdl1"/>
</dbReference>
<dbReference type="eggNOG" id="ENOG502S27G">
    <property type="taxonomic scope" value="Eukaryota"/>
</dbReference>
<dbReference type="InParanoid" id="B3DLE8"/>
<dbReference type="OMA" id="KQHAFTK"/>
<dbReference type="OrthoDB" id="2121607at2759"/>
<dbReference type="Reactome" id="R-XTR-141444">
    <property type="pathway name" value="Amplification of signal from unattached kinetochores via a MAD2 inhibitory signal"/>
</dbReference>
<dbReference type="Reactome" id="R-XTR-2467813">
    <property type="pathway name" value="Separation of Sister Chromatids"/>
</dbReference>
<dbReference type="Reactome" id="R-XTR-2500257">
    <property type="pathway name" value="Resolution of Sister Chromatid Cohesion"/>
</dbReference>
<dbReference type="Reactome" id="R-XTR-5663220">
    <property type="pathway name" value="RHO GTPases Activate Formins"/>
</dbReference>
<dbReference type="Reactome" id="R-XTR-68877">
    <property type="pathway name" value="Mitotic Prometaphase"/>
</dbReference>
<dbReference type="Reactome" id="R-XTR-9648025">
    <property type="pathway name" value="EML4 and NUDC in mitotic spindle formation"/>
</dbReference>
<dbReference type="Proteomes" id="UP000008143">
    <property type="component" value="Chromosome 3"/>
</dbReference>
<dbReference type="GO" id="GO:0005634">
    <property type="term" value="C:nucleus"/>
    <property type="evidence" value="ECO:0000250"/>
    <property type="project" value="UniProtKB"/>
</dbReference>
<dbReference type="GO" id="GO:0000940">
    <property type="term" value="C:outer kinetochore"/>
    <property type="evidence" value="ECO:0000250"/>
    <property type="project" value="UniProtKB"/>
</dbReference>
<dbReference type="GO" id="GO:0000922">
    <property type="term" value="C:spindle pole"/>
    <property type="evidence" value="ECO:0000250"/>
    <property type="project" value="UniProtKB"/>
</dbReference>
<dbReference type="GO" id="GO:0043515">
    <property type="term" value="F:kinetochore binding"/>
    <property type="evidence" value="ECO:0000250"/>
    <property type="project" value="UniProtKB"/>
</dbReference>
<dbReference type="GO" id="GO:0051301">
    <property type="term" value="P:cell division"/>
    <property type="evidence" value="ECO:0007669"/>
    <property type="project" value="UniProtKB-KW"/>
</dbReference>
<dbReference type="GO" id="GO:0000132">
    <property type="term" value="P:establishment of mitotic spindle orientation"/>
    <property type="evidence" value="ECO:0000250"/>
    <property type="project" value="UniProtKB"/>
</dbReference>
<dbReference type="GO" id="GO:0007080">
    <property type="term" value="P:mitotic metaphase chromosome alignment"/>
    <property type="evidence" value="ECO:0000250"/>
    <property type="project" value="UniProtKB"/>
</dbReference>
<dbReference type="GO" id="GO:0007094">
    <property type="term" value="P:mitotic spindle assembly checkpoint signaling"/>
    <property type="evidence" value="ECO:0007669"/>
    <property type="project" value="InterPro"/>
</dbReference>
<dbReference type="GO" id="GO:0034501">
    <property type="term" value="P:protein localization to kinetochore"/>
    <property type="evidence" value="ECO:0000250"/>
    <property type="project" value="UniProtKB"/>
</dbReference>
<dbReference type="HAMAP" id="MF_03041">
    <property type="entry name" value="SPDLY"/>
    <property type="match status" value="1"/>
</dbReference>
<dbReference type="InterPro" id="IPR028593">
    <property type="entry name" value="SPDLY_chordates"/>
</dbReference>
<dbReference type="InterPro" id="IPR051149">
    <property type="entry name" value="Spindly/BICDR_Dynein_Adapter"/>
</dbReference>
<dbReference type="PANTHER" id="PTHR32123">
    <property type="entry name" value="BICD FAMILY-LIKE CARGO ADAPTER"/>
    <property type="match status" value="1"/>
</dbReference>
<dbReference type="PANTHER" id="PTHR32123:SF9">
    <property type="entry name" value="PROTEIN SPINDLY"/>
    <property type="match status" value="1"/>
</dbReference>
<comment type="function">
    <text evidence="1 2">Required for the localization of dynein and dynactin to the mitotic kintochore. Dynein is believed to control the initial lateral interaction between the kinetochore and spindle microtubules and to facilitate the subsequent formation of end-on kinetochore-microtubule attachments mediated by the NDC80 complex. May act as an adapter protein linking the dynein motor complex to various cargos (By similarity).</text>
</comment>
<comment type="subcellular location">
    <subcellularLocation>
        <location evidence="2">Chromosome</location>
        <location evidence="2">Centromere</location>
        <location evidence="2">Kinetochore</location>
    </subcellularLocation>
</comment>
<comment type="similarity">
    <text evidence="2">Belongs to the Spindly family.</text>
</comment>
<protein>
    <recommendedName>
        <fullName evidence="2">Protein Spindly</fullName>
    </recommendedName>
    <alternativeName>
        <fullName evidence="2">Coiled-coil domain-containing protein 99</fullName>
    </alternativeName>
    <alternativeName>
        <fullName evidence="2">Spindle apparatus coiled-coil domain-containing protein 1</fullName>
    </alternativeName>
</protein>
<feature type="chain" id="PRO_0000383345" description="Protein Spindly">
    <location>
        <begin position="1"/>
        <end position="611"/>
    </location>
</feature>
<feature type="region of interest" description="Disordered" evidence="3">
    <location>
        <begin position="499"/>
        <end position="611"/>
    </location>
</feature>
<feature type="coiled-coil region" evidence="2">
    <location>
        <begin position="1"/>
        <end position="288"/>
    </location>
</feature>
<feature type="compositionally biased region" description="Basic and acidic residues" evidence="3">
    <location>
        <begin position="499"/>
        <end position="511"/>
    </location>
</feature>
<feature type="compositionally biased region" description="Polar residues" evidence="3">
    <location>
        <begin position="549"/>
        <end position="567"/>
    </location>
</feature>
<feature type="compositionally biased region" description="Basic and acidic residues" evidence="3">
    <location>
        <begin position="570"/>
        <end position="583"/>
    </location>
</feature>
<keyword id="KW-0131">Cell cycle</keyword>
<keyword id="KW-0132">Cell division</keyword>
<keyword id="KW-0137">Centromere</keyword>
<keyword id="KW-0158">Chromosome</keyword>
<keyword id="KW-0175">Coiled coil</keyword>
<keyword id="KW-0995">Kinetochore</keyword>
<keyword id="KW-0498">Mitosis</keyword>
<keyword id="KW-1185">Reference proteome</keyword>
<gene>
    <name type="primary">spdl1</name>
    <name type="synonym">ccdc99</name>
</gene>
<organism>
    <name type="scientific">Xenopus tropicalis</name>
    <name type="common">Western clawed frog</name>
    <name type="synonym">Silurana tropicalis</name>
    <dbReference type="NCBI Taxonomy" id="8364"/>
    <lineage>
        <taxon>Eukaryota</taxon>
        <taxon>Metazoa</taxon>
        <taxon>Chordata</taxon>
        <taxon>Craniata</taxon>
        <taxon>Vertebrata</taxon>
        <taxon>Euteleostomi</taxon>
        <taxon>Amphibia</taxon>
        <taxon>Batrachia</taxon>
        <taxon>Anura</taxon>
        <taxon>Pipoidea</taxon>
        <taxon>Pipidae</taxon>
        <taxon>Xenopodinae</taxon>
        <taxon>Xenopus</taxon>
        <taxon>Silurana</taxon>
    </lineage>
</organism>
<evidence type="ECO:0000250" key="1">
    <source>
        <dbReference type="UniProtKB" id="Q96EA4"/>
    </source>
</evidence>
<evidence type="ECO:0000255" key="2">
    <source>
        <dbReference type="HAMAP-Rule" id="MF_03041"/>
    </source>
</evidence>
<evidence type="ECO:0000256" key="3">
    <source>
        <dbReference type="SAM" id="MobiDB-lite"/>
    </source>
</evidence>
<name>SPDLY_XENTR</name>
<sequence>MEESETVLKLRLQLKEAEEERIKAAQYGLELLESQSDLQNQLEEQRNEMTSTIENLEQEKYSLQREVELKNRMLESLTSECENIRQQQKLCLEQLQEQLERNHHRELSEIKDKLEKLKAELDEARLSEKQLKHKLEYQSEVLANKSEELRMMSERVHETMSSEMLTLQLEKTELESAKANLEQEVNELQYREQQLLLTNGTQSRQLERLQDEKEDREKEAVGYFKALEKAREANQDLQAQLDIALQQAQDPNSKGNSLFAEVEDRRAEMERQLISMKVQFQSLQKQHAFSRQQMHRMKVQIATLLQLKGSQSDPEQLERLQAMVAQKNSEFETLVMKVRQLEKSQQICENGPVANSSDGLGQGDETYYVDLLKMKLVNSSKEIEKIKDELSLQRMKALAESQRVLDLERKLFANDRHLKLSQGENMKLRVNLDEMKMKYEPDEIAKIRTQKRRKEQLPLDCAIDNTSATVTSGSQAHGLSDAIPEDMCPAESTVHRNLLKEDSSLSTKEQDLSSVAVKPIEPANGQPPKERKRVRIVENENDNQDINKRNTNNCSVTSTSPRSASEESTSESKRFDEEQEKRKQERKSRLRAPPVLHVPSKPAATTQCPQQ</sequence>
<proteinExistence type="evidence at transcript level"/>